<name>TYSY_FRATN</name>
<sequence>MREYLNFLKYIKENGVLKGDRTGTGTRSIFGYQMRFDLQKGFPLVTTKKIHIPSVVHELLWFLSGSTNIKYLNDNNVRIWNEWATVDGELGPIYGKQWRDFNGQGIDQIADVIQMLKTNPNSRRILVSAWNPCVVPSEKISPQENVVKGNSALPPCHAMFQFYVANNKLSCMLTQRSADAFLGVPFNIASYSLLTHMVAQQCNLDVGEFIWSGGDCHIYNNHIEQVNEQLSREPLALPTLKILRKPNSIFDYKYEDFEFENYNHHPAIKAKISV</sequence>
<proteinExistence type="inferred from homology"/>
<protein>
    <recommendedName>
        <fullName evidence="1">Thymidylate synthase</fullName>
        <shortName evidence="1">TS</shortName>
        <shortName evidence="1">TSase</shortName>
        <ecNumber evidence="1">2.1.1.45</ecNumber>
    </recommendedName>
</protein>
<evidence type="ECO:0000255" key="1">
    <source>
        <dbReference type="HAMAP-Rule" id="MF_00008"/>
    </source>
</evidence>
<keyword id="KW-0963">Cytoplasm</keyword>
<keyword id="KW-0489">Methyltransferase</keyword>
<keyword id="KW-0545">Nucleotide biosynthesis</keyword>
<keyword id="KW-0808">Transferase</keyword>
<comment type="function">
    <text evidence="1">Catalyzes the reductive methylation of 2'-deoxyuridine-5'-monophosphate (dUMP) to 2'-deoxythymidine-5'-monophosphate (dTMP) while utilizing 5,10-methylenetetrahydrofolate (mTHF) as the methyl donor and reductant in the reaction, yielding dihydrofolate (DHF) as a by-product. This enzymatic reaction provides an intracellular de novo source of dTMP, an essential precursor for DNA biosynthesis.</text>
</comment>
<comment type="catalytic activity">
    <reaction evidence="1">
        <text>dUMP + (6R)-5,10-methylene-5,6,7,8-tetrahydrofolate = 7,8-dihydrofolate + dTMP</text>
        <dbReference type="Rhea" id="RHEA:12104"/>
        <dbReference type="ChEBI" id="CHEBI:15636"/>
        <dbReference type="ChEBI" id="CHEBI:57451"/>
        <dbReference type="ChEBI" id="CHEBI:63528"/>
        <dbReference type="ChEBI" id="CHEBI:246422"/>
        <dbReference type="EC" id="2.1.1.45"/>
    </reaction>
</comment>
<comment type="pathway">
    <text evidence="1">Pyrimidine metabolism; dTTP biosynthesis.</text>
</comment>
<comment type="subunit">
    <text evidence="1">Homodimer.</text>
</comment>
<comment type="subcellular location">
    <subcellularLocation>
        <location evidence="1">Cytoplasm</location>
    </subcellularLocation>
</comment>
<comment type="similarity">
    <text evidence="1">Belongs to the thymidylate synthase family. Bacterial-type ThyA subfamily.</text>
</comment>
<feature type="chain" id="PRO_1000000600" description="Thymidylate synthase">
    <location>
        <begin position="1"/>
        <end position="274"/>
    </location>
</feature>
<feature type="active site" description="Nucleophile" evidence="1">
    <location>
        <position position="156"/>
    </location>
</feature>
<feature type="binding site" description="in other chain" evidence="1">
    <location>
        <position position="21"/>
    </location>
    <ligand>
        <name>dUMP</name>
        <dbReference type="ChEBI" id="CHEBI:246422"/>
        <note>ligand shared between dimeric partners</note>
    </ligand>
</feature>
<feature type="binding site" evidence="1">
    <location>
        <position position="51"/>
    </location>
    <ligand>
        <name>(6R)-5,10-methylene-5,6,7,8-tetrahydrofolate</name>
        <dbReference type="ChEBI" id="CHEBI:15636"/>
    </ligand>
</feature>
<feature type="binding site" evidence="1">
    <location>
        <begin position="123"/>
        <end position="124"/>
    </location>
    <ligand>
        <name>dUMP</name>
        <dbReference type="ChEBI" id="CHEBI:246422"/>
        <note>ligand shared between dimeric partners</note>
    </ligand>
</feature>
<feature type="binding site" description="in other chain" evidence="1">
    <location>
        <begin position="176"/>
        <end position="179"/>
    </location>
    <ligand>
        <name>dUMP</name>
        <dbReference type="ChEBI" id="CHEBI:246422"/>
        <note>ligand shared between dimeric partners</note>
    </ligand>
</feature>
<feature type="binding site" evidence="1">
    <location>
        <position position="179"/>
    </location>
    <ligand>
        <name>(6R)-5,10-methylene-5,6,7,8-tetrahydrofolate</name>
        <dbReference type="ChEBI" id="CHEBI:15636"/>
    </ligand>
</feature>
<feature type="binding site" description="in other chain" evidence="1">
    <location>
        <position position="187"/>
    </location>
    <ligand>
        <name>dUMP</name>
        <dbReference type="ChEBI" id="CHEBI:246422"/>
        <note>ligand shared between dimeric partners</note>
    </ligand>
</feature>
<feature type="binding site" description="in other chain" evidence="1">
    <location>
        <begin position="217"/>
        <end position="219"/>
    </location>
    <ligand>
        <name>dUMP</name>
        <dbReference type="ChEBI" id="CHEBI:246422"/>
        <note>ligand shared between dimeric partners</note>
    </ligand>
</feature>
<feature type="binding site" evidence="1">
    <location>
        <position position="273"/>
    </location>
    <ligand>
        <name>(6R)-5,10-methylene-5,6,7,8-tetrahydrofolate</name>
        <dbReference type="ChEBI" id="CHEBI:15636"/>
    </ligand>
</feature>
<dbReference type="EC" id="2.1.1.45" evidence="1"/>
<dbReference type="EMBL" id="CP000439">
    <property type="protein sequence ID" value="ABK90129.1"/>
    <property type="molecule type" value="Genomic_DNA"/>
</dbReference>
<dbReference type="RefSeq" id="WP_003025777.1">
    <property type="nucleotide sequence ID" value="NZ_CP009633.1"/>
</dbReference>
<dbReference type="SMR" id="A0Q7B4"/>
<dbReference type="KEGG" id="ftn:FTN_1248"/>
<dbReference type="KEGG" id="ftx:AW25_758"/>
<dbReference type="BioCyc" id="FTUL401614:G1G75-1293-MONOMER"/>
<dbReference type="UniPathway" id="UPA00575"/>
<dbReference type="Proteomes" id="UP000000762">
    <property type="component" value="Chromosome"/>
</dbReference>
<dbReference type="GO" id="GO:0005829">
    <property type="term" value="C:cytosol"/>
    <property type="evidence" value="ECO:0007669"/>
    <property type="project" value="TreeGrafter"/>
</dbReference>
<dbReference type="GO" id="GO:0004799">
    <property type="term" value="F:thymidylate synthase activity"/>
    <property type="evidence" value="ECO:0007669"/>
    <property type="project" value="UniProtKB-UniRule"/>
</dbReference>
<dbReference type="GO" id="GO:0006231">
    <property type="term" value="P:dTMP biosynthetic process"/>
    <property type="evidence" value="ECO:0007669"/>
    <property type="project" value="UniProtKB-UniRule"/>
</dbReference>
<dbReference type="GO" id="GO:0006235">
    <property type="term" value="P:dTTP biosynthetic process"/>
    <property type="evidence" value="ECO:0007669"/>
    <property type="project" value="UniProtKB-UniRule"/>
</dbReference>
<dbReference type="GO" id="GO:0032259">
    <property type="term" value="P:methylation"/>
    <property type="evidence" value="ECO:0007669"/>
    <property type="project" value="UniProtKB-KW"/>
</dbReference>
<dbReference type="CDD" id="cd00351">
    <property type="entry name" value="TS_Pyrimidine_HMase"/>
    <property type="match status" value="1"/>
</dbReference>
<dbReference type="FunFam" id="3.30.572.10:FF:000013">
    <property type="entry name" value="Thymidylate synthase"/>
    <property type="match status" value="1"/>
</dbReference>
<dbReference type="Gene3D" id="3.30.572.10">
    <property type="entry name" value="Thymidylate synthase/dCMP hydroxymethylase domain"/>
    <property type="match status" value="1"/>
</dbReference>
<dbReference type="HAMAP" id="MF_00008">
    <property type="entry name" value="Thymidy_synth_bact"/>
    <property type="match status" value="1"/>
</dbReference>
<dbReference type="InterPro" id="IPR045097">
    <property type="entry name" value="Thymidate_synth/dCMP_Mease"/>
</dbReference>
<dbReference type="InterPro" id="IPR023451">
    <property type="entry name" value="Thymidate_synth/dCMP_Mease_dom"/>
</dbReference>
<dbReference type="InterPro" id="IPR036926">
    <property type="entry name" value="Thymidate_synth/dCMP_Mease_sf"/>
</dbReference>
<dbReference type="InterPro" id="IPR000398">
    <property type="entry name" value="Thymidylate_synthase"/>
</dbReference>
<dbReference type="NCBIfam" id="NF002497">
    <property type="entry name" value="PRK01827.1-3"/>
    <property type="match status" value="1"/>
</dbReference>
<dbReference type="NCBIfam" id="NF002499">
    <property type="entry name" value="PRK01827.1-5"/>
    <property type="match status" value="1"/>
</dbReference>
<dbReference type="NCBIfam" id="TIGR03284">
    <property type="entry name" value="thym_sym"/>
    <property type="match status" value="2"/>
</dbReference>
<dbReference type="PANTHER" id="PTHR11548">
    <property type="entry name" value="THYMIDYLATE SYNTHASE 1"/>
    <property type="match status" value="1"/>
</dbReference>
<dbReference type="PANTHER" id="PTHR11548:SF1">
    <property type="entry name" value="THYMIDYLATE SYNTHASE 1"/>
    <property type="match status" value="1"/>
</dbReference>
<dbReference type="Pfam" id="PF00303">
    <property type="entry name" value="Thymidylat_synt"/>
    <property type="match status" value="1"/>
</dbReference>
<dbReference type="PRINTS" id="PR00108">
    <property type="entry name" value="THYMDSNTHASE"/>
</dbReference>
<dbReference type="SUPFAM" id="SSF55831">
    <property type="entry name" value="Thymidylate synthase/dCMP hydroxymethylase"/>
    <property type="match status" value="1"/>
</dbReference>
<organism>
    <name type="scientific">Francisella tularensis subsp. novicida (strain U112)</name>
    <dbReference type="NCBI Taxonomy" id="401614"/>
    <lineage>
        <taxon>Bacteria</taxon>
        <taxon>Pseudomonadati</taxon>
        <taxon>Pseudomonadota</taxon>
        <taxon>Gammaproteobacteria</taxon>
        <taxon>Thiotrichales</taxon>
        <taxon>Francisellaceae</taxon>
        <taxon>Francisella</taxon>
    </lineage>
</organism>
<gene>
    <name evidence="1" type="primary">thyA</name>
    <name type="ordered locus">FTN_1248</name>
</gene>
<accession>A0Q7B4</accession>
<reference key="1">
    <citation type="journal article" date="2007" name="Genome Biol.">
        <title>Comparison of Francisella tularensis genomes reveals evolutionary events associated with the emergence of human pathogenic strains.</title>
        <authorList>
            <person name="Rohmer L."/>
            <person name="Fong C."/>
            <person name="Abmayr S."/>
            <person name="Wasnick M."/>
            <person name="Larson Freeman T.J."/>
            <person name="Radey M."/>
            <person name="Guina T."/>
            <person name="Svensson K."/>
            <person name="Hayden H.S."/>
            <person name="Jacobs M."/>
            <person name="Gallagher L.A."/>
            <person name="Manoil C."/>
            <person name="Ernst R.K."/>
            <person name="Drees B."/>
            <person name="Buckley D."/>
            <person name="Haugen E."/>
            <person name="Bovee D."/>
            <person name="Zhou Y."/>
            <person name="Chang J."/>
            <person name="Levy R."/>
            <person name="Lim R."/>
            <person name="Gillett W."/>
            <person name="Guenthener D."/>
            <person name="Kang A."/>
            <person name="Shaffer S.A."/>
            <person name="Taylor G."/>
            <person name="Chen J."/>
            <person name="Gallis B."/>
            <person name="D'Argenio D.A."/>
            <person name="Forsman M."/>
            <person name="Olson M.V."/>
            <person name="Goodlett D.R."/>
            <person name="Kaul R."/>
            <person name="Miller S.I."/>
            <person name="Brittnacher M.J."/>
        </authorList>
    </citation>
    <scope>NUCLEOTIDE SEQUENCE [LARGE SCALE GENOMIC DNA]</scope>
    <source>
        <strain>U112</strain>
    </source>
</reference>